<proteinExistence type="evidence at transcript level"/>
<accession>Q20390</accession>
<accession>Q68GX0</accession>
<protein>
    <recommendedName>
        <fullName evidence="4">Palmitoyl-protein thioesterase 1</fullName>
        <shortName evidence="4">PPT-1</shortName>
        <ecNumber evidence="6">3.1.2.22</ecNumber>
    </recommendedName>
    <alternativeName>
        <fullName>Palmitoyl-protein hydrolase 1</fullName>
    </alternativeName>
</protein>
<feature type="signal peptide" evidence="2">
    <location>
        <begin position="1"/>
        <end position="16"/>
    </location>
</feature>
<feature type="chain" id="PRO_0000247504" description="Palmitoyl-protein thioesterase 1">
    <location>
        <begin position="17"/>
        <end position="298"/>
    </location>
</feature>
<feature type="active site" description="Nucleophile" evidence="1">
    <location>
        <position position="107"/>
    </location>
</feature>
<feature type="active site" evidence="1">
    <location>
        <position position="224"/>
    </location>
</feature>
<feature type="active site" evidence="1">
    <location>
        <position position="280"/>
    </location>
</feature>
<feature type="glycosylation site" description="N-linked (GlcNAc...) asparagine" evidence="2">
    <location>
        <position position="20"/>
    </location>
</feature>
<feature type="glycosylation site" description="N-linked (GlcNAc...) asparagine" evidence="2">
    <location>
        <position position="250"/>
    </location>
</feature>
<feature type="disulfide bond" evidence="1">
    <location>
        <begin position="37"/>
        <end position="38"/>
    </location>
</feature>
<feature type="disulfide bond" evidence="1">
    <location>
        <begin position="88"/>
        <end position="120"/>
    </location>
</feature>
<feature type="disulfide bond" evidence="1">
    <location>
        <begin position="144"/>
        <end position="151"/>
    </location>
</feature>
<gene>
    <name type="primary">ppt-1</name>
    <name type="ORF">F44C4.5</name>
</gene>
<evidence type="ECO:0000250" key="1"/>
<evidence type="ECO:0000255" key="2"/>
<evidence type="ECO:0000269" key="3">
    <source>
    </source>
</evidence>
<evidence type="ECO:0000303" key="4">
    <source>
    </source>
</evidence>
<evidence type="ECO:0000305" key="5"/>
<evidence type="ECO:0000305" key="6">
    <source>
    </source>
</evidence>
<sequence>MRYFPLLLCLLAITTAEFRNATKQVPVVMWHGMGDCCCNPLSMGSVKKLFEEQIPGVYVHSLQLGSSITKDIEHGFYANTNELVYMACIKIKNDPELKNGYNAIGFSQGAQFLRAVAQRCPNPPMKNLVSVGGQHQGVFGAPYCIGDNIMCNGVRRLIDLGAYLPFVQKRVVQAQYWHDPNQVEEYKKRSIFLADINNENNNNPTYKRNLLSLKNLVLVKFNQDHMVVPKDSSWFGFYKDGDIDTILPMNETDLYKEDRIGLKKLHESGRIHFMDVDGDHLQIPRSVLVNDIIKKYFM</sequence>
<organism>
    <name type="scientific">Caenorhabditis elegans</name>
    <dbReference type="NCBI Taxonomy" id="6239"/>
    <lineage>
        <taxon>Eukaryota</taxon>
        <taxon>Metazoa</taxon>
        <taxon>Ecdysozoa</taxon>
        <taxon>Nematoda</taxon>
        <taxon>Chromadorea</taxon>
        <taxon>Rhabditida</taxon>
        <taxon>Rhabditina</taxon>
        <taxon>Rhabditomorpha</taxon>
        <taxon>Rhabditoidea</taxon>
        <taxon>Rhabditidae</taxon>
        <taxon>Peloderinae</taxon>
        <taxon>Caenorhabditis</taxon>
    </lineage>
</organism>
<comment type="function">
    <text evidence="3">Removes thioester-linked fatty acyl groups such as palmitate (hexadecanoate) from modified cysteine residues in proteins or peptides.</text>
</comment>
<comment type="catalytic activity">
    <reaction evidence="6">
        <text>S-hexadecanoyl-L-cysteinyl-[protein] + H2O = L-cysteinyl-[protein] + hexadecanoate + H(+)</text>
        <dbReference type="Rhea" id="RHEA:19233"/>
        <dbReference type="Rhea" id="RHEA-COMP:10131"/>
        <dbReference type="Rhea" id="RHEA-COMP:11032"/>
        <dbReference type="ChEBI" id="CHEBI:7896"/>
        <dbReference type="ChEBI" id="CHEBI:15377"/>
        <dbReference type="ChEBI" id="CHEBI:15378"/>
        <dbReference type="ChEBI" id="CHEBI:29950"/>
        <dbReference type="ChEBI" id="CHEBI:74151"/>
        <dbReference type="EC" id="3.1.2.22"/>
    </reaction>
    <physiologicalReaction direction="left-to-right" evidence="6">
        <dbReference type="Rhea" id="RHEA:19234"/>
    </physiologicalReaction>
</comment>
<comment type="disruption phenotype">
    <text evidence="3">Worms exhibit a developmental delay and mild reproductive defects. They have abnormal mitochondria in muscle and neuronal cells.</text>
</comment>
<comment type="similarity">
    <text evidence="5">Belongs to the palmitoyl-protein thioesterase family.</text>
</comment>
<comment type="sequence caution" evidence="5">
    <conflict type="erroneous initiation">
        <sequence resource="EMBL-CDS" id="AAU01161"/>
    </conflict>
    <text>Truncated N-terminus.</text>
</comment>
<name>PPT1_CAEEL</name>
<dbReference type="EC" id="3.1.2.22" evidence="6"/>
<dbReference type="EMBL" id="FO081381">
    <property type="protein sequence ID" value="CCD71207.2"/>
    <property type="molecule type" value="Genomic_DNA"/>
</dbReference>
<dbReference type="EMBL" id="AY691522">
    <property type="protein sequence ID" value="AAU01161.1"/>
    <property type="status" value="ALT_INIT"/>
    <property type="molecule type" value="mRNA"/>
</dbReference>
<dbReference type="PIR" id="T30106">
    <property type="entry name" value="T30106"/>
</dbReference>
<dbReference type="RefSeq" id="NP_504684.2">
    <property type="nucleotide sequence ID" value="NM_072283.6"/>
</dbReference>
<dbReference type="SMR" id="Q20390"/>
<dbReference type="BioGRID" id="56239">
    <property type="interactions" value="2"/>
</dbReference>
<dbReference type="FunCoup" id="Q20390">
    <property type="interactions" value="2531"/>
</dbReference>
<dbReference type="STRING" id="6239.F44C4.5.1"/>
<dbReference type="ESTHER" id="caeel-F44C4.5">
    <property type="family name" value="Palmitoyl-protein_thioesterase"/>
</dbReference>
<dbReference type="GlyCosmos" id="Q20390">
    <property type="glycosylation" value="2 sites, No reported glycans"/>
</dbReference>
<dbReference type="PaxDb" id="6239-F44C4.5"/>
<dbReference type="PeptideAtlas" id="Q20390"/>
<dbReference type="EnsemblMetazoa" id="F44C4.5.1">
    <property type="protein sequence ID" value="F44C4.5.1"/>
    <property type="gene ID" value="WBGene00004092"/>
</dbReference>
<dbReference type="GeneID" id="191744"/>
<dbReference type="KEGG" id="cel:CELE_F44C4.5"/>
<dbReference type="UCSC" id="F44C4.5">
    <property type="organism name" value="c. elegans"/>
</dbReference>
<dbReference type="AGR" id="WB:WBGene00004092"/>
<dbReference type="CTD" id="191744"/>
<dbReference type="WormBase" id="F44C4.5">
    <property type="protein sequence ID" value="CE47017"/>
    <property type="gene ID" value="WBGene00004092"/>
    <property type="gene designation" value="ppt-1"/>
</dbReference>
<dbReference type="eggNOG" id="KOG2541">
    <property type="taxonomic scope" value="Eukaryota"/>
</dbReference>
<dbReference type="GeneTree" id="ENSGT00940000156790"/>
<dbReference type="HOGENOM" id="CLU_050129_0_0_1"/>
<dbReference type="InParanoid" id="Q20390"/>
<dbReference type="OMA" id="KFVMVMF"/>
<dbReference type="OrthoDB" id="10263094at2759"/>
<dbReference type="PhylomeDB" id="Q20390"/>
<dbReference type="Reactome" id="R-CEL-75105">
    <property type="pathway name" value="Fatty acyl-CoA biosynthesis"/>
</dbReference>
<dbReference type="PRO" id="PR:Q20390"/>
<dbReference type="Proteomes" id="UP000001940">
    <property type="component" value="Chromosome V"/>
</dbReference>
<dbReference type="Bgee" id="WBGene00004092">
    <property type="expression patterns" value="Expressed in embryo and 3 other cell types or tissues"/>
</dbReference>
<dbReference type="GO" id="GO:0005576">
    <property type="term" value="C:extracellular region"/>
    <property type="evidence" value="ECO:0000318"/>
    <property type="project" value="GO_Central"/>
</dbReference>
<dbReference type="GO" id="GO:0005764">
    <property type="term" value="C:lysosome"/>
    <property type="evidence" value="ECO:0000250"/>
    <property type="project" value="WormBase"/>
</dbReference>
<dbReference type="GO" id="GO:0052816">
    <property type="term" value="F:long-chain fatty acyl-CoA hydrolase activity"/>
    <property type="evidence" value="ECO:0000318"/>
    <property type="project" value="GO_Central"/>
</dbReference>
<dbReference type="GO" id="GO:0008474">
    <property type="term" value="F:palmitoyl-(protein) hydrolase activity"/>
    <property type="evidence" value="ECO:0000314"/>
    <property type="project" value="WormBase"/>
</dbReference>
<dbReference type="GO" id="GO:0018991">
    <property type="term" value="P:egg-laying behavior"/>
    <property type="evidence" value="ECO:0000315"/>
    <property type="project" value="WormBase"/>
</dbReference>
<dbReference type="GO" id="GO:0006897">
    <property type="term" value="P:endocytosis"/>
    <property type="evidence" value="ECO:0000318"/>
    <property type="project" value="GO_Central"/>
</dbReference>
<dbReference type="GO" id="GO:0007005">
    <property type="term" value="P:mitochondrion organization"/>
    <property type="evidence" value="ECO:0000315"/>
    <property type="project" value="WormBase"/>
</dbReference>
<dbReference type="GO" id="GO:0007399">
    <property type="term" value="P:nervous system development"/>
    <property type="evidence" value="ECO:0000318"/>
    <property type="project" value="GO_Central"/>
</dbReference>
<dbReference type="GO" id="GO:0009791">
    <property type="term" value="P:post-embryonic development"/>
    <property type="evidence" value="ECO:0000315"/>
    <property type="project" value="WormBase"/>
</dbReference>
<dbReference type="GO" id="GO:0030163">
    <property type="term" value="P:protein catabolic process"/>
    <property type="evidence" value="ECO:0000315"/>
    <property type="project" value="WormBase"/>
</dbReference>
<dbReference type="FunFam" id="3.40.50.1820:FF:000107">
    <property type="entry name" value="Palmitoyl-protein thioesterase 1"/>
    <property type="match status" value="1"/>
</dbReference>
<dbReference type="Gene3D" id="3.40.50.1820">
    <property type="entry name" value="alpha/beta hydrolase"/>
    <property type="match status" value="1"/>
</dbReference>
<dbReference type="InterPro" id="IPR029058">
    <property type="entry name" value="AB_hydrolase_fold"/>
</dbReference>
<dbReference type="InterPro" id="IPR002472">
    <property type="entry name" value="Palm_thioest"/>
</dbReference>
<dbReference type="PANTHER" id="PTHR11247:SF8">
    <property type="entry name" value="PALMITOYL-PROTEIN THIOESTERASE 1"/>
    <property type="match status" value="1"/>
</dbReference>
<dbReference type="PANTHER" id="PTHR11247">
    <property type="entry name" value="PALMITOYL-PROTEIN THIOESTERASE/DOLICHYLDIPHOSPHATASE 1"/>
    <property type="match status" value="1"/>
</dbReference>
<dbReference type="Pfam" id="PF02089">
    <property type="entry name" value="Palm_thioest"/>
    <property type="match status" value="1"/>
</dbReference>
<dbReference type="PRINTS" id="PR00414">
    <property type="entry name" value="PPTHIESTRASE"/>
</dbReference>
<dbReference type="SUPFAM" id="SSF53474">
    <property type="entry name" value="alpha/beta-Hydrolases"/>
    <property type="match status" value="1"/>
</dbReference>
<reference key="1">
    <citation type="journal article" date="1998" name="Science">
        <title>Genome sequence of the nematode C. elegans: a platform for investigating biology.</title>
        <authorList>
            <consortium name="The C. elegans sequencing consortium"/>
        </authorList>
    </citation>
    <scope>NUCLEOTIDE SEQUENCE [LARGE SCALE GENOMIC DNA]</scope>
    <source>
        <strain>Bristol N2</strain>
    </source>
</reference>
<reference key="2">
    <citation type="journal article" date="2005" name="J. Neurosci. Res.">
        <title>Identification and characterization of Caenorhabditis elegans palmitoyl protein thioesterase1.</title>
        <authorList>
            <person name="Porter M.Y."/>
            <person name="Turmaine M."/>
            <person name="Mole S.E."/>
        </authorList>
    </citation>
    <scope>NUCLEOTIDE SEQUENCE [MRNA] OF 25-282</scope>
    <scope>FUNCTION</scope>
    <scope>DISRUPTION PHENOTYPE</scope>
</reference>
<keyword id="KW-1015">Disulfide bond</keyword>
<keyword id="KW-0325">Glycoprotein</keyword>
<keyword id="KW-0378">Hydrolase</keyword>
<keyword id="KW-1185">Reference proteome</keyword>
<keyword id="KW-0732">Signal</keyword>